<sequence length="327" mass="38170">MSFLGGFFGPICEIDIVLNDGETRKMAEMKTEDGKVEKHYLFYDGESVSGKVNLAFKQPGKRLEHQGIRIEFVGQIELFNDKSNTHEFVNLVKELALPGELTQSRSYDFEFMQVEKPYESYIGANVRLRYFLKVTIVRRLTDLVKEYDLIVHQLATYPDVNNSIKMEVGIEDCLHIEFEYNKSKYHLKDVIVGKIYFLLVRIKIQHMELQLIKKEITGIGPSTTTETETIAKYEIMDGAPVKGESIPIRLFLAGYDPTPTMRDVNKKFSVRYFLNLVLVDEEDRRYFKQQEIILWRKAPEKLRKQRTNFHQRFESPESQASAEQPEM</sequence>
<accession>O75436</accession>
<accession>A8MZ56</accession>
<accession>B2RDD3</accession>
<accession>Q8TBH4</accession>
<accession>Q9H982</accession>
<name>VP26A_HUMAN</name>
<keyword id="KW-0002">3D-structure</keyword>
<keyword id="KW-0025">Alternative splicing</keyword>
<keyword id="KW-0963">Cytoplasm</keyword>
<keyword id="KW-0967">Endosome</keyword>
<keyword id="KW-0472">Membrane</keyword>
<keyword id="KW-0597">Phosphoprotein</keyword>
<keyword id="KW-0653">Protein transport</keyword>
<keyword id="KW-1267">Proteomics identification</keyword>
<keyword id="KW-1185">Reference proteome</keyword>
<keyword id="KW-0813">Transport</keyword>
<gene>
    <name evidence="29 31" type="primary">VPS26A</name>
    <name type="synonym">VPS26</name>
</gene>
<reference key="1">
    <citation type="journal article" date="2000" name="Mol. Biol. Cell">
        <title>Human orthologs of yeast vacuolar protein sorting proteins Vps26, 29, and 35: assembly into multimeric complexes.</title>
        <authorList>
            <person name="Renfrew Haft C."/>
            <person name="de la Luz Sierra M."/>
            <person name="Bafford R."/>
            <person name="Lesniak M.A."/>
            <person name="Barr V.A."/>
            <person name="Taylor S.I."/>
        </authorList>
    </citation>
    <scope>NUCLEOTIDE SEQUENCE [MRNA] (ISOFORM 1)</scope>
    <scope>INTERACTION WITH VPS29; VPS35; SNX1 AND SNX2</scope>
    <scope>SUBUNIT</scope>
    <source>
        <tissue>Colon</tissue>
    </source>
</reference>
<reference key="2">
    <citation type="journal article" date="1998" name="Proc. Natl. Acad. Sci. U.S.A.">
        <title>Identification of genes expressed in human CD34(+) hematopoietic stem/progenitor cells by expressed sequence tags and efficient full-length cDNA cloning.</title>
        <authorList>
            <person name="Mao M."/>
            <person name="Fu G."/>
            <person name="Wu J.-S."/>
            <person name="Zhang Q.-H."/>
            <person name="Zhou J."/>
            <person name="Kan L.-X."/>
            <person name="Huang Q.-H."/>
            <person name="He K.-L."/>
            <person name="Gu B.-W."/>
            <person name="Han Z.-G."/>
            <person name="Shen Y."/>
            <person name="Gu J."/>
            <person name="Yu Y.-P."/>
            <person name="Xu S.-H."/>
            <person name="Wang Y.-X."/>
            <person name="Chen S.-J."/>
            <person name="Chen Z."/>
        </authorList>
    </citation>
    <scope>NUCLEOTIDE SEQUENCE [LARGE SCALE MRNA] (ISOFORM 1)</scope>
    <source>
        <tissue>Umbilical cord blood</tissue>
    </source>
</reference>
<reference key="3">
    <citation type="journal article" date="2004" name="Nat. Genet.">
        <title>Complete sequencing and characterization of 21,243 full-length human cDNAs.</title>
        <authorList>
            <person name="Ota T."/>
            <person name="Suzuki Y."/>
            <person name="Nishikawa T."/>
            <person name="Otsuki T."/>
            <person name="Sugiyama T."/>
            <person name="Irie R."/>
            <person name="Wakamatsu A."/>
            <person name="Hayashi K."/>
            <person name="Sato H."/>
            <person name="Nagai K."/>
            <person name="Kimura K."/>
            <person name="Makita H."/>
            <person name="Sekine M."/>
            <person name="Obayashi M."/>
            <person name="Nishi T."/>
            <person name="Shibahara T."/>
            <person name="Tanaka T."/>
            <person name="Ishii S."/>
            <person name="Yamamoto J."/>
            <person name="Saito K."/>
            <person name="Kawai Y."/>
            <person name="Isono Y."/>
            <person name="Nakamura Y."/>
            <person name="Nagahari K."/>
            <person name="Murakami K."/>
            <person name="Yasuda T."/>
            <person name="Iwayanagi T."/>
            <person name="Wagatsuma M."/>
            <person name="Shiratori A."/>
            <person name="Sudo H."/>
            <person name="Hosoiri T."/>
            <person name="Kaku Y."/>
            <person name="Kodaira H."/>
            <person name="Kondo H."/>
            <person name="Sugawara M."/>
            <person name="Takahashi M."/>
            <person name="Kanda K."/>
            <person name="Yokoi T."/>
            <person name="Furuya T."/>
            <person name="Kikkawa E."/>
            <person name="Omura Y."/>
            <person name="Abe K."/>
            <person name="Kamihara K."/>
            <person name="Katsuta N."/>
            <person name="Sato K."/>
            <person name="Tanikawa M."/>
            <person name="Yamazaki M."/>
            <person name="Ninomiya K."/>
            <person name="Ishibashi T."/>
            <person name="Yamashita H."/>
            <person name="Murakawa K."/>
            <person name="Fujimori K."/>
            <person name="Tanai H."/>
            <person name="Kimata M."/>
            <person name="Watanabe M."/>
            <person name="Hiraoka S."/>
            <person name="Chiba Y."/>
            <person name="Ishida S."/>
            <person name="Ono Y."/>
            <person name="Takiguchi S."/>
            <person name="Watanabe S."/>
            <person name="Yosida M."/>
            <person name="Hotuta T."/>
            <person name="Kusano J."/>
            <person name="Kanehori K."/>
            <person name="Takahashi-Fujii A."/>
            <person name="Hara H."/>
            <person name="Tanase T.-O."/>
            <person name="Nomura Y."/>
            <person name="Togiya S."/>
            <person name="Komai F."/>
            <person name="Hara R."/>
            <person name="Takeuchi K."/>
            <person name="Arita M."/>
            <person name="Imose N."/>
            <person name="Musashino K."/>
            <person name="Yuuki H."/>
            <person name="Oshima A."/>
            <person name="Sasaki N."/>
            <person name="Aotsuka S."/>
            <person name="Yoshikawa Y."/>
            <person name="Matsunawa H."/>
            <person name="Ichihara T."/>
            <person name="Shiohata N."/>
            <person name="Sano S."/>
            <person name="Moriya S."/>
            <person name="Momiyama H."/>
            <person name="Satoh N."/>
            <person name="Takami S."/>
            <person name="Terashima Y."/>
            <person name="Suzuki O."/>
            <person name="Nakagawa S."/>
            <person name="Senoh A."/>
            <person name="Mizoguchi H."/>
            <person name="Goto Y."/>
            <person name="Shimizu F."/>
            <person name="Wakebe H."/>
            <person name="Hishigaki H."/>
            <person name="Watanabe T."/>
            <person name="Sugiyama A."/>
            <person name="Takemoto M."/>
            <person name="Kawakami B."/>
            <person name="Yamazaki M."/>
            <person name="Watanabe K."/>
            <person name="Kumagai A."/>
            <person name="Itakura S."/>
            <person name="Fukuzumi Y."/>
            <person name="Fujimori Y."/>
            <person name="Komiyama M."/>
            <person name="Tashiro H."/>
            <person name="Tanigami A."/>
            <person name="Fujiwara T."/>
            <person name="Ono T."/>
            <person name="Yamada K."/>
            <person name="Fujii Y."/>
            <person name="Ozaki K."/>
            <person name="Hirao M."/>
            <person name="Ohmori Y."/>
            <person name="Kawabata A."/>
            <person name="Hikiji T."/>
            <person name="Kobatake N."/>
            <person name="Inagaki H."/>
            <person name="Ikema Y."/>
            <person name="Okamoto S."/>
            <person name="Okitani R."/>
            <person name="Kawakami T."/>
            <person name="Noguchi S."/>
            <person name="Itoh T."/>
            <person name="Shigeta K."/>
            <person name="Senba T."/>
            <person name="Matsumura K."/>
            <person name="Nakajima Y."/>
            <person name="Mizuno T."/>
            <person name="Morinaga M."/>
            <person name="Sasaki M."/>
            <person name="Togashi T."/>
            <person name="Oyama M."/>
            <person name="Hata H."/>
            <person name="Watanabe M."/>
            <person name="Komatsu T."/>
            <person name="Mizushima-Sugano J."/>
            <person name="Satoh T."/>
            <person name="Shirai Y."/>
            <person name="Takahashi Y."/>
            <person name="Nakagawa K."/>
            <person name="Okumura K."/>
            <person name="Nagase T."/>
            <person name="Nomura N."/>
            <person name="Kikuchi H."/>
            <person name="Masuho Y."/>
            <person name="Yamashita R."/>
            <person name="Nakai K."/>
            <person name="Yada T."/>
            <person name="Nakamura Y."/>
            <person name="Ohara O."/>
            <person name="Isogai T."/>
            <person name="Sugano S."/>
        </authorList>
    </citation>
    <scope>NUCLEOTIDE SEQUENCE [LARGE SCALE MRNA] (ISOFORM 1)</scope>
    <source>
        <tissue>Tongue</tissue>
    </source>
</reference>
<reference key="4">
    <citation type="journal article" date="2004" name="Nature">
        <title>The DNA sequence and comparative analysis of human chromosome 10.</title>
        <authorList>
            <person name="Deloukas P."/>
            <person name="Earthrowl M.E."/>
            <person name="Grafham D.V."/>
            <person name="Rubenfield M."/>
            <person name="French L."/>
            <person name="Steward C.A."/>
            <person name="Sims S.K."/>
            <person name="Jones M.C."/>
            <person name="Searle S."/>
            <person name="Scott C."/>
            <person name="Howe K."/>
            <person name="Hunt S.E."/>
            <person name="Andrews T.D."/>
            <person name="Gilbert J.G.R."/>
            <person name="Swarbreck D."/>
            <person name="Ashurst J.L."/>
            <person name="Taylor A."/>
            <person name="Battles J."/>
            <person name="Bird C.P."/>
            <person name="Ainscough R."/>
            <person name="Almeida J.P."/>
            <person name="Ashwell R.I.S."/>
            <person name="Ambrose K.D."/>
            <person name="Babbage A.K."/>
            <person name="Bagguley C.L."/>
            <person name="Bailey J."/>
            <person name="Banerjee R."/>
            <person name="Bates K."/>
            <person name="Beasley H."/>
            <person name="Bray-Allen S."/>
            <person name="Brown A.J."/>
            <person name="Brown J.Y."/>
            <person name="Burford D.C."/>
            <person name="Burrill W."/>
            <person name="Burton J."/>
            <person name="Cahill P."/>
            <person name="Camire D."/>
            <person name="Carter N.P."/>
            <person name="Chapman J.C."/>
            <person name="Clark S.Y."/>
            <person name="Clarke G."/>
            <person name="Clee C.M."/>
            <person name="Clegg S."/>
            <person name="Corby N."/>
            <person name="Coulson A."/>
            <person name="Dhami P."/>
            <person name="Dutta I."/>
            <person name="Dunn M."/>
            <person name="Faulkner L."/>
            <person name="Frankish A."/>
            <person name="Frankland J.A."/>
            <person name="Garner P."/>
            <person name="Garnett J."/>
            <person name="Gribble S."/>
            <person name="Griffiths C."/>
            <person name="Grocock R."/>
            <person name="Gustafson E."/>
            <person name="Hammond S."/>
            <person name="Harley J.L."/>
            <person name="Hart E."/>
            <person name="Heath P.D."/>
            <person name="Ho T.P."/>
            <person name="Hopkins B."/>
            <person name="Horne J."/>
            <person name="Howden P.J."/>
            <person name="Huckle E."/>
            <person name="Hynds C."/>
            <person name="Johnson C."/>
            <person name="Johnson D."/>
            <person name="Kana A."/>
            <person name="Kay M."/>
            <person name="Kimberley A.M."/>
            <person name="Kershaw J.K."/>
            <person name="Kokkinaki M."/>
            <person name="Laird G.K."/>
            <person name="Lawlor S."/>
            <person name="Lee H.M."/>
            <person name="Leongamornlert D.A."/>
            <person name="Laird G."/>
            <person name="Lloyd C."/>
            <person name="Lloyd D.M."/>
            <person name="Loveland J."/>
            <person name="Lovell J."/>
            <person name="McLaren S."/>
            <person name="McLay K.E."/>
            <person name="McMurray A."/>
            <person name="Mashreghi-Mohammadi M."/>
            <person name="Matthews L."/>
            <person name="Milne S."/>
            <person name="Nickerson T."/>
            <person name="Nguyen M."/>
            <person name="Overton-Larty E."/>
            <person name="Palmer S.A."/>
            <person name="Pearce A.V."/>
            <person name="Peck A.I."/>
            <person name="Pelan S."/>
            <person name="Phillimore B."/>
            <person name="Porter K."/>
            <person name="Rice C.M."/>
            <person name="Rogosin A."/>
            <person name="Ross M.T."/>
            <person name="Sarafidou T."/>
            <person name="Sehra H.K."/>
            <person name="Shownkeen R."/>
            <person name="Skuce C.D."/>
            <person name="Smith M."/>
            <person name="Standring L."/>
            <person name="Sycamore N."/>
            <person name="Tester J."/>
            <person name="Thorpe A."/>
            <person name="Torcasso W."/>
            <person name="Tracey A."/>
            <person name="Tromans A."/>
            <person name="Tsolas J."/>
            <person name="Wall M."/>
            <person name="Walsh J."/>
            <person name="Wang H."/>
            <person name="Weinstock K."/>
            <person name="West A.P."/>
            <person name="Willey D.L."/>
            <person name="Whitehead S.L."/>
            <person name="Wilming L."/>
            <person name="Wray P.W."/>
            <person name="Young L."/>
            <person name="Chen Y."/>
            <person name="Lovering R.C."/>
            <person name="Moschonas N.K."/>
            <person name="Siebert R."/>
            <person name="Fechtel K."/>
            <person name="Bentley D."/>
            <person name="Durbin R.M."/>
            <person name="Hubbard T."/>
            <person name="Doucette-Stamm L."/>
            <person name="Beck S."/>
            <person name="Smith D.R."/>
            <person name="Rogers J."/>
        </authorList>
    </citation>
    <scope>NUCLEOTIDE SEQUENCE [LARGE SCALE GENOMIC DNA]</scope>
</reference>
<reference key="5">
    <citation type="submission" date="2005-07" db="EMBL/GenBank/DDBJ databases">
        <authorList>
            <person name="Mural R.J."/>
            <person name="Istrail S."/>
            <person name="Sutton G.G."/>
            <person name="Florea L."/>
            <person name="Halpern A.L."/>
            <person name="Mobarry C.M."/>
            <person name="Lippert R."/>
            <person name="Walenz B."/>
            <person name="Shatkay H."/>
            <person name="Dew I."/>
            <person name="Miller J.R."/>
            <person name="Flanigan M.J."/>
            <person name="Edwards N.J."/>
            <person name="Bolanos R."/>
            <person name="Fasulo D."/>
            <person name="Halldorsson B.V."/>
            <person name="Hannenhalli S."/>
            <person name="Turner R."/>
            <person name="Yooseph S."/>
            <person name="Lu F."/>
            <person name="Nusskern D.R."/>
            <person name="Shue B.C."/>
            <person name="Zheng X.H."/>
            <person name="Zhong F."/>
            <person name="Delcher A.L."/>
            <person name="Huson D.H."/>
            <person name="Kravitz S.A."/>
            <person name="Mouchard L."/>
            <person name="Reinert K."/>
            <person name="Remington K.A."/>
            <person name="Clark A.G."/>
            <person name="Waterman M.S."/>
            <person name="Eichler E.E."/>
            <person name="Adams M.D."/>
            <person name="Hunkapiller M.W."/>
            <person name="Myers E.W."/>
            <person name="Venter J.C."/>
        </authorList>
    </citation>
    <scope>NUCLEOTIDE SEQUENCE [LARGE SCALE GENOMIC DNA]</scope>
</reference>
<reference key="6">
    <citation type="journal article" date="2004" name="Genome Res.">
        <title>The status, quality, and expansion of the NIH full-length cDNA project: the Mammalian Gene Collection (MGC).</title>
        <authorList>
            <consortium name="The MGC Project Team"/>
        </authorList>
    </citation>
    <scope>NUCLEOTIDE SEQUENCE [LARGE SCALE MRNA] (ISOFORM 1)</scope>
    <scope>NUCLEOTIDE SEQUENCE [LARGE SCALE MRNA] OF 3-249 (ISOFORM 2)</scope>
    <source>
        <tissue>Brain</tissue>
        <tissue>Embryonic testis carcinoma</tissue>
    </source>
</reference>
<reference key="7">
    <citation type="journal article" date="2004" name="J. Cell Biol.">
        <title>Cargo-selective endosomal sorting for retrieval to the Golgi requires retromer.</title>
        <authorList>
            <person name="Seaman M.N.J."/>
        </authorList>
    </citation>
    <scope>FUNCTION</scope>
</reference>
<reference key="8">
    <citation type="journal article" date="2004" name="J. Cell Biol.">
        <title>Role of the mammalian retromer in sorting of the cation-independent mannose 6-phosphate receptor.</title>
        <authorList>
            <person name="Arighi C.N."/>
            <person name="Hartnell L.M."/>
            <person name="Aguilar R.C."/>
            <person name="Haft C.R."/>
            <person name="Bonifacino J.S."/>
        </authorList>
    </citation>
    <scope>FUNCTION</scope>
    <scope>SUBCELLULAR LOCATION</scope>
</reference>
<reference key="9">
    <citation type="journal article" date="2004" name="Nat. Cell Biol.">
        <title>The mammalian retromer regulates transcytosis of the polymeric immunoglobulin receptor.</title>
        <authorList>
            <person name="Verges M."/>
            <person name="Luton F."/>
            <person name="Gruber C."/>
            <person name="Tiemann F."/>
            <person name="Reinders L.G."/>
            <person name="Huang L."/>
            <person name="Burlingame A.L."/>
            <person name="Haft C.R."/>
            <person name="Mostov K.E."/>
        </authorList>
    </citation>
    <scope>FUNCTION</scope>
</reference>
<reference key="10">
    <citation type="journal article" date="2005" name="Ann. Neurol.">
        <title>Model-guided microarray implicates the retromer complex in Alzheimer's disease.</title>
        <authorList>
            <person name="Small S.A."/>
            <person name="Kent K."/>
            <person name="Pierce A."/>
            <person name="Leung C."/>
            <person name="Kang M.S."/>
            <person name="Okada H."/>
            <person name="Honig L."/>
            <person name="Vonsattel J.-P."/>
            <person name="Kim T.-W."/>
        </authorList>
    </citation>
    <scope>INDUCTION</scope>
</reference>
<reference key="11">
    <citation type="journal article" date="2005" name="Traffic">
        <title>A novel mammalian retromer component, Vps26B.</title>
        <authorList>
            <person name="Kerr M.C."/>
            <person name="Bennetts J.S."/>
            <person name="Simpson F."/>
            <person name="Thomas E.C."/>
            <person name="Flegg C."/>
            <person name="Gleeson P.A."/>
            <person name="Wicking C."/>
            <person name="Teasdale R.D."/>
        </authorList>
    </citation>
    <scope>SUBCELLULAR LOCATION</scope>
    <scope>INTERACTION WITH VPS35</scope>
</reference>
<reference key="12">
    <citation type="journal article" date="2006" name="Mol. Biol. Cell">
        <title>An essential role for SNX1 in lysosomal sorting of protease-activated receptor-1: evidence for retromer-, Hrs-, and Tsg101-independent functions of sorting nexins.</title>
        <authorList>
            <person name="Gullapalli A."/>
            <person name="Wolfe B.L."/>
            <person name="Griffin C.T."/>
            <person name="Magnuson T."/>
            <person name="Trejo J."/>
        </authorList>
    </citation>
    <scope>FUNCTION</scope>
</reference>
<reference key="13">
    <citation type="journal article" date="2006" name="Nat. Biotechnol.">
        <title>A probability-based approach for high-throughput protein phosphorylation analysis and site localization.</title>
        <authorList>
            <person name="Beausoleil S.A."/>
            <person name="Villen J."/>
            <person name="Gerber S.A."/>
            <person name="Rush J."/>
            <person name="Gygi S.P."/>
        </authorList>
    </citation>
    <scope>IDENTIFICATION BY MASS SPECTROMETRY [LARGE SCALE ANALYSIS]</scope>
    <source>
        <tissue>Cervix carcinoma</tissue>
    </source>
</reference>
<reference key="14">
    <citation type="journal article" date="2007" name="Neurobiol. Aging">
        <title>No association of vacuolar protein sorting 26 polymorphisms with Alzheimer's disease.</title>
        <authorList>
            <person name="Riemenschneider M."/>
            <person name="Schoepfer-Wendels A."/>
            <person name="Friedrich P."/>
            <person name="Konta L."/>
            <person name="Laws S.M."/>
            <person name="Mueller J.C."/>
            <person name="Kurz A."/>
            <person name="Forstl H."/>
        </authorList>
    </citation>
    <scope>INDUCTION</scope>
</reference>
<reference key="15">
    <citation type="journal article" date="2007" name="Traffic">
        <title>EHD1 interacts with retromer to stabilize SNX1 tubules and facilitate endosome-to-Golgi retrieval.</title>
        <authorList>
            <person name="Gokool S."/>
            <person name="Tattersall D."/>
            <person name="Seaman M.N."/>
        </authorList>
    </citation>
    <scope>INTERACTION WITH EHD1</scope>
</reference>
<reference key="16">
    <citation type="journal article" date="2009" name="Dev. Cell">
        <title>The retromer coat complex coordinates endosomal sorting and dynein-mediated transport, with carrier recognition by the trans-Golgi network.</title>
        <authorList>
            <person name="Wassmer T."/>
            <person name="Attar N."/>
            <person name="Harterink M."/>
            <person name="van Weering J.R."/>
            <person name="Traer C.J."/>
            <person name="Oakley J."/>
            <person name="Goud B."/>
            <person name="Stephens D.J."/>
            <person name="Verkade P."/>
            <person name="Korswagen H.C."/>
            <person name="Cullen P.J."/>
        </authorList>
    </citation>
    <scope>INTERACTION WITH SNX1; SNX2; SNX5 AND SNX6</scope>
</reference>
<reference key="17">
    <citation type="journal article" date="2009" name="J. Cell Sci.">
        <title>Membrane recruitment of the cargo-selective retromer subcomplex is catalysed by the small GTPase Rab7 and inhibited by the Rab-GAP TBC1D5.</title>
        <authorList>
            <person name="Seaman M.N."/>
            <person name="Harbour M.E."/>
            <person name="Tattersall D."/>
            <person name="Read E."/>
            <person name="Bright N."/>
        </authorList>
    </citation>
    <scope>INTERACTION WITH RAB7A</scope>
</reference>
<reference key="18">
    <citation type="journal article" date="2010" name="J. Biol. Chem.">
        <title>A protein interaction network for Ecm29 links the 26 S proteasome to molecular motors and endosomal components.</title>
        <authorList>
            <person name="Gorbea C."/>
            <person name="Pratt G."/>
            <person name="Ustrell V."/>
            <person name="Bell R."/>
            <person name="Sahasrabudhe S."/>
            <person name="Hughes R.E."/>
            <person name="Rechsteiner M."/>
        </authorList>
    </citation>
    <scope>SUBCELLULAR LOCATION</scope>
    <scope>INTERACTION WITH ECPAS</scope>
</reference>
<reference key="19">
    <citation type="journal article" date="2010" name="J. Cell Sci.">
        <title>The cargo-selective retromer complex is a recruiting hub for protein complexes that regulate endosomal tubule dynamics.</title>
        <authorList>
            <person name="Harbour M.E."/>
            <person name="Breusegem S.Y."/>
            <person name="Antrobus R."/>
            <person name="Freeman C."/>
            <person name="Reid E."/>
            <person name="Seaman M.N."/>
        </authorList>
    </citation>
    <scope>FUNCTION</scope>
    <scope>INTERACTION WITH WASHC5</scope>
</reference>
<reference key="20">
    <citation type="journal article" date="2010" name="Sci. Signal.">
        <title>Quantitative phosphoproteomics reveals widespread full phosphorylation site occupancy during mitosis.</title>
        <authorList>
            <person name="Olsen J.V."/>
            <person name="Vermeulen M."/>
            <person name="Santamaria A."/>
            <person name="Kumar C."/>
            <person name="Miller M.L."/>
            <person name="Jensen L.J."/>
            <person name="Gnad F."/>
            <person name="Cox J."/>
            <person name="Jensen T.S."/>
            <person name="Nigg E.A."/>
            <person name="Brunak S."/>
            <person name="Mann M."/>
        </authorList>
    </citation>
    <scope>PHOSPHORYLATION [LARGE SCALE ANALYSIS] AT SER-315</scope>
    <scope>IDENTIFICATION BY MASS SPECTROMETRY [LARGE SCALE ANALYSIS]</scope>
    <source>
        <tissue>Cervix carcinoma</tissue>
    </source>
</reference>
<reference key="21">
    <citation type="journal article" date="2011" name="BMC Syst. Biol.">
        <title>Initial characterization of the human central proteome.</title>
        <authorList>
            <person name="Burkard T.R."/>
            <person name="Planyavsky M."/>
            <person name="Kaupe I."/>
            <person name="Breitwieser F.P."/>
            <person name="Buerckstuemmer T."/>
            <person name="Bennett K.L."/>
            <person name="Superti-Furga G."/>
            <person name="Colinge J."/>
        </authorList>
    </citation>
    <scope>IDENTIFICATION BY MASS SPECTROMETRY [LARGE SCALE ANALYSIS]</scope>
</reference>
<reference key="22">
    <citation type="journal article" date="2011" name="Nat. Cell Biol.">
        <title>SNX27 mediates retromer tubule entry and endosome-to-plasma membrane trafficking of signalling receptors.</title>
        <authorList>
            <person name="Temkin P."/>
            <person name="Lauffer B."/>
            <person name="Jager S."/>
            <person name="Cimermancic P."/>
            <person name="Krogan N.J."/>
            <person name="von Zastrow M."/>
        </authorList>
    </citation>
    <scope>FUNCTION</scope>
</reference>
<reference key="23">
    <citation type="journal article" date="2011" name="Nat. Cell Biol.">
        <title>A SNX3-dependent retromer pathway mediates retrograde transport of the Wnt sorting receptor Wntless and is required for Wnt secretion.</title>
        <authorList>
            <person name="Harterink M."/>
            <person name="Port F."/>
            <person name="Lorenowicz M.J."/>
            <person name="McGough I.J."/>
            <person name="Silhankova M."/>
            <person name="Betist M.C."/>
            <person name="van Weering J.R."/>
            <person name="van Heesbeen R.G."/>
            <person name="Middelkoop T.C."/>
            <person name="Basler K."/>
            <person name="Cullen P.J."/>
            <person name="Korswagen H.C."/>
        </authorList>
    </citation>
    <scope>INTERACTION WITH SNX3</scope>
    <scope>FUNCTION OF THE SNX3-RETROMER</scope>
</reference>
<reference key="24">
    <citation type="journal article" date="2012" name="Biochem. J.">
        <title>Recruitment of the endosomal WASH complex is mediated by the extended 'tail' of Fam21 binding to the retromer protein Vps35.</title>
        <authorList>
            <person name="Harbour M.E."/>
            <person name="Breusegem S.Y."/>
            <person name="Seaman M.N."/>
        </authorList>
    </citation>
    <scope>FUNCTION</scope>
</reference>
<reference key="25">
    <citation type="journal article" date="2012" name="J. Neurosci.">
        <title>Retromer binds the FANSHY sorting motif in SorLA to regulate amyloid precursor protein sorting and processing.</title>
        <authorList>
            <person name="Fjorback A.W."/>
            <person name="Seaman M."/>
            <person name="Gustafsen C."/>
            <person name="Mehmedbasic A."/>
            <person name="Gokool S."/>
            <person name="Wu C."/>
            <person name="Militz D."/>
            <person name="Schmidt V."/>
            <person name="Madsen P."/>
            <person name="Nyengaard J.R."/>
            <person name="Willnow T.E."/>
            <person name="Christensen E.I."/>
            <person name="Mobley W.B."/>
            <person name="Nykjaer A."/>
            <person name="Andersen O.M."/>
        </authorList>
    </citation>
    <scope>FUNCTION</scope>
    <scope>INTERACTION WITH SORL1</scope>
</reference>
<reference key="26">
    <citation type="journal article" date="2012" name="Mol. Cell. Biol.">
        <title>The role of ceroid lipofuscinosis neuronal protein 5 (CLN5) in endosomal sorting.</title>
        <authorList>
            <person name="Mamo A."/>
            <person name="Jules F."/>
            <person name="Dumaresq-Doiron K."/>
            <person name="Costantino S."/>
            <person name="Lefrancois S."/>
        </authorList>
    </citation>
    <scope>SUBCELLULAR LOCATION</scope>
</reference>
<reference key="27">
    <citation type="journal article" date="2013" name="Nat. Cell Biol.">
        <title>A global analysis of SNX27-retromer assembly and cargo specificity reveals a function in glucose and metal ion transport.</title>
        <authorList>
            <person name="Steinberg F."/>
            <person name="Gallon M."/>
            <person name="Winfield M."/>
            <person name="Thomas E.C."/>
            <person name="Bell A.J."/>
            <person name="Heesom K.J."/>
            <person name="Tavare J.M."/>
            <person name="Cullen P.J."/>
        </authorList>
    </citation>
    <scope>INTERACTION WITH SNX27</scope>
    <scope>FUNCTION OF THE SNX27-RETROMER</scope>
</reference>
<reference key="28">
    <citation type="journal article" date="2014" name="J. Proteomics">
        <title>An enzyme assisted RP-RPLC approach for in-depth analysis of human liver phosphoproteome.</title>
        <authorList>
            <person name="Bian Y."/>
            <person name="Song C."/>
            <person name="Cheng K."/>
            <person name="Dong M."/>
            <person name="Wang F."/>
            <person name="Huang J."/>
            <person name="Sun D."/>
            <person name="Wang L."/>
            <person name="Ye M."/>
            <person name="Zou H."/>
        </authorList>
    </citation>
    <scope>IDENTIFICATION BY MASS SPECTROMETRY [LARGE SCALE ANALYSIS]</scope>
    <source>
        <tissue>Liver</tissue>
    </source>
</reference>
<reference key="29">
    <citation type="journal article" date="2014" name="Proc. Natl. Acad. Sci. U.S.A.">
        <title>A mechanism for retromer endosomal coat complex assembly with cargo.</title>
        <authorList>
            <person name="Harrison M.S."/>
            <person name="Hung C.S."/>
            <person name="Liu T.T."/>
            <person name="Christiano R."/>
            <person name="Walther T.C."/>
            <person name="Burd C.G."/>
        </authorList>
    </citation>
    <scope>INTERACTION WITH RAB7A</scope>
</reference>
<reference key="30">
    <citation type="journal article" date="2017" name="Nat. Cell Biol.">
        <title>Retriever is a multiprotein complex for retromer-independent endosomal cargo recycling.</title>
        <authorList>
            <person name="McNally K.E."/>
            <person name="Faulkner R."/>
            <person name="Steinberg F."/>
            <person name="Gallon M."/>
            <person name="Ghai R."/>
            <person name="Pim D."/>
            <person name="Langton P."/>
            <person name="Pearson N."/>
            <person name="Danson C.M."/>
            <person name="Naegele H."/>
            <person name="Morris L.L."/>
            <person name="Singla A."/>
            <person name="Overlee B.L."/>
            <person name="Heesom K.J."/>
            <person name="Sessions R."/>
            <person name="Banks L."/>
            <person name="Collins B.M."/>
            <person name="Berger I."/>
            <person name="Billadeau D.D."/>
            <person name="Burstein E."/>
            <person name="Cullen P.J."/>
        </authorList>
    </citation>
    <scope>INTERACTION WITH VPS35</scope>
</reference>
<reference key="31">
    <citation type="journal article" date="2018" name="Nat. Commun.">
        <title>SNX3-retromer requires an evolutionary conserved MON2:DOPEY2:ATP9A complex to mediate Wntless sorting and Wnt secretion.</title>
        <authorList>
            <person name="McGough I.J."/>
            <person name="de Groot R.E.A."/>
            <person name="Jellett A.P."/>
            <person name="Betist M.C."/>
            <person name="Varandas K.C."/>
            <person name="Danson C.M."/>
            <person name="Heesom K.J."/>
            <person name="Korswagen H.C."/>
            <person name="Cullen P.J."/>
        </authorList>
    </citation>
    <scope>INTERACTION WITH SNX3</scope>
    <scope>IDENTIFICATION BY MASS SPECTROMETRY</scope>
</reference>
<reference key="32">
    <citation type="journal article" date="2006" name="Nat. Struct. Mol. Biol.">
        <title>The retromer subunit Vps26 has an arrestin fold and binds Vps35 through its C-terminal domain.</title>
        <authorList>
            <person name="Shi H."/>
            <person name="Rojas R."/>
            <person name="Bonifacino J.S."/>
            <person name="Hurley J.H."/>
        </authorList>
    </citation>
    <scope>X-RAY CRYSTALLOGRAPHY (2.1 ANGSTROMS)</scope>
    <scope>SUBCELLULAR LOCATION</scope>
    <scope>INTERACTION WITH VPS35</scope>
    <scope>MUTAGENESIS OF 236-ILE-MET-237</scope>
</reference>
<evidence type="ECO:0000250" key="1">
    <source>
        <dbReference type="UniProtKB" id="P40336"/>
    </source>
</evidence>
<evidence type="ECO:0000256" key="2">
    <source>
        <dbReference type="SAM" id="MobiDB-lite"/>
    </source>
</evidence>
<evidence type="ECO:0000269" key="3">
    <source>
    </source>
</evidence>
<evidence type="ECO:0000269" key="4">
    <source>
    </source>
</evidence>
<evidence type="ECO:0000269" key="5">
    <source>
    </source>
</evidence>
<evidence type="ECO:0000269" key="6">
    <source>
    </source>
</evidence>
<evidence type="ECO:0000269" key="7">
    <source>
    </source>
</evidence>
<evidence type="ECO:0000269" key="8">
    <source>
    </source>
</evidence>
<evidence type="ECO:0000269" key="9">
    <source>
    </source>
</evidence>
<evidence type="ECO:0000269" key="10">
    <source>
    </source>
</evidence>
<evidence type="ECO:0000269" key="11">
    <source>
    </source>
</evidence>
<evidence type="ECO:0000269" key="12">
    <source>
    </source>
</evidence>
<evidence type="ECO:0000269" key="13">
    <source>
    </source>
</evidence>
<evidence type="ECO:0000269" key="14">
    <source>
    </source>
</evidence>
<evidence type="ECO:0000269" key="15">
    <source>
    </source>
</evidence>
<evidence type="ECO:0000269" key="16">
    <source>
    </source>
</evidence>
<evidence type="ECO:0000269" key="17">
    <source>
    </source>
</evidence>
<evidence type="ECO:0000269" key="18">
    <source>
    </source>
</evidence>
<evidence type="ECO:0000269" key="19">
    <source>
    </source>
</evidence>
<evidence type="ECO:0000269" key="20">
    <source>
    </source>
</evidence>
<evidence type="ECO:0000269" key="21">
    <source>
    </source>
</evidence>
<evidence type="ECO:0000269" key="22">
    <source>
    </source>
</evidence>
<evidence type="ECO:0000303" key="23">
    <source>
    </source>
</evidence>
<evidence type="ECO:0000303" key="24">
    <source>
    </source>
</evidence>
<evidence type="ECO:0000303" key="25">
    <source>
    </source>
</evidence>
<evidence type="ECO:0000303" key="26">
    <source>
    </source>
</evidence>
<evidence type="ECO:0000303" key="27">
    <source>
    </source>
</evidence>
<evidence type="ECO:0000303" key="28">
    <source>
    </source>
</evidence>
<evidence type="ECO:0000303" key="29">
    <source>
    </source>
</evidence>
<evidence type="ECO:0000305" key="30"/>
<evidence type="ECO:0000312" key="31">
    <source>
        <dbReference type="HGNC" id="HGNC:12711"/>
    </source>
</evidence>
<evidence type="ECO:0007744" key="32">
    <source>
    </source>
</evidence>
<evidence type="ECO:0007829" key="33">
    <source>
        <dbReference type="PDB" id="2FAU"/>
    </source>
</evidence>
<evidence type="ECO:0007829" key="34">
    <source>
        <dbReference type="PDB" id="5F0J"/>
    </source>
</evidence>
<comment type="function">
    <text evidence="1 4 5 6 9 17 18 25 26 27 28 30">Acts as a component of the retromer cargo-selective complex (CSC). The CSC is believed to be the core functional component of retromer or respective retromer complex variants acting to prevent missorting of selected transmembrane cargo proteins into the lysosomal degradation pathway. The recruitment of the CSC to the endosomal membrane involves RAB7A and SNX3. The SNX-BAR retromer mediates retrograde transport of cargo proteins from endosomes to the trans-Golgi network (TGN) and is involved in endosome-to-plasma membrane transport for cargo protein recycling. The SNX3-retromer mediates the retrograde endosome-to-TGN transport of WLS distinct from the SNX-BAR retromer pathway. The SNX27-retromer is believed to be involved in endosome-to-plasma membrane trafficking and recycling of a broad spectrum of cargo proteins (Probable). The CSC seems to act as recruitment hub for other proteins, such as the WASH complex and TBC1D5 (Probable). Required for retrograde transport of lysosomal enzyme receptor IGF2R (PubMed:15078902, PubMed:15078903). Required to regulate transcytosis of the polymeric immunoglobulin receptor (pIgR-pIgA) (PubMed:15247922). Required for the endosomal localization of WASHC2A (indicative for the WASH complex) (PubMed:22070227). Required for the endosomal localization of TBC1D5 (PubMed:20923837). Mediates retromer cargo recognition of SORL1 and is involved in trafficking of SORL1 implicated in sorting and processing of APP (PubMed:22279231). Involved in retromer-independent lysosomal sorting of F2R (PubMed:16407403). Involved in recycling of ADRB2 (PubMed:21602791). Enhances the affinity of SNX27 for PDZ-binding motifs in cargo proteins (By similarity).</text>
</comment>
<comment type="subunit">
    <text evidence="1 3 7 10 12 13 14 15 16 18 20 21 22 24 26 27">Component of the heterotrimeric retromer cargo-selective complex (CSC), also described as vacuolar protein sorting subcomplex (VPS), formed by VPS26 (VPS26A or VPS26B), VPS29 and VPS35 (PubMed:11102511, PubMed:28892079). The CSC has a highly elongated structure with VPS26 and VPS29 binding independently at opposite distal ends of VPS35 as central platform (By similarity). The CSC is believed to associate with variable sorting nexins to form functionally distinct retromer complex variants. The originally described retromer complex (also called SNX-BAR retromer) is a pentamer containing the CSC and a heterodimeric membrane-deforming subcomplex formed between SNX1 or SNX2 and SNX5 or SNX6 (also called SNX-BAR subcomplex); the respective CSC and SNX-BAR subcomplexes associate with low affinity. The CSC associates with SNX3 to form a SNX3-retromer complex. The CSC associates with SNX27, the WASH complex and the SNX-BAR subcomplex to form the SNX27-retromer complex (Probable). Interacts with VPS29, VPS35, SNX1, SNX2, SNX5, SNX6, SNX3, SNX27, RAB7A, ECPAS, EHD1, WASHC5, SORL1 (PubMed:11102511, PubMed:16190980, PubMed:16732284, PubMed:17868075, PubMed:19531583, PubMed:19619496, PubMed:20682791, PubMed:20923837, PubMed:21725319, PubMed:22279231, PubMed:24344282, PubMed:28892079, PubMed:30213940).</text>
</comment>
<comment type="interaction">
    <interactant intactId="EBI-1043891">
        <id>O75436</id>
    </interactant>
    <interactant intactId="EBI-10288852">
        <id>Q9UBU8-2</id>
        <label>MORF4L1</label>
    </interactant>
    <organismsDiffer>false</organismsDiffer>
    <experiments>3</experiments>
</comment>
<comment type="interaction">
    <interactant intactId="EBI-1043891">
        <id>O75436</id>
    </interactant>
    <interactant intactId="EBI-713665">
        <id>P19404</id>
        <label>NDUFV2</label>
    </interactant>
    <organismsDiffer>false</organismsDiffer>
    <experiments>3</experiments>
</comment>
<comment type="interaction">
    <interactant intactId="EBI-1043891">
        <id>O75436</id>
    </interactant>
    <interactant intactId="EBI-718596">
        <id>Q9UBQ0</id>
        <label>VPS29</label>
    </interactant>
    <organismsDiffer>false</organismsDiffer>
    <experiments>13</experiments>
</comment>
<comment type="interaction">
    <interactant intactId="EBI-1043891">
        <id>O75436</id>
    </interactant>
    <interactant intactId="EBI-1054634">
        <id>Q96QK1</id>
        <label>VPS35</label>
    </interactant>
    <organismsDiffer>false</organismsDiffer>
    <experiments>29</experiments>
</comment>
<comment type="interaction">
    <interactant intactId="EBI-1043891">
        <id>O75436</id>
    </interactant>
    <interactant intactId="EBI-1210440">
        <id>O43309</id>
        <label>ZSCAN12</label>
    </interactant>
    <organismsDiffer>false</organismsDiffer>
    <experiments>3</experiments>
</comment>
<comment type="subcellular location">
    <subcellularLocation>
        <location evidence="5">Cytoplasm</location>
    </subcellularLocation>
    <subcellularLocation>
        <location evidence="19">Endosome membrane</location>
        <topology evidence="1">Peripheral membrane protein</topology>
    </subcellularLocation>
    <subcellularLocation>
        <location evidence="5 7 10 14">Early endosome</location>
    </subcellularLocation>
    <text evidence="1">Localizes to tubular profiles adjacent to endosomes (PubMed:15078903). Predominantly found in early not late endosomes (By similarity).</text>
</comment>
<comment type="alternative products">
    <event type="alternative splicing"/>
    <isoform>
        <id>O75436-1</id>
        <name>1</name>
        <sequence type="displayed"/>
    </isoform>
    <isoform>
        <id>O75436-2</id>
        <name>2</name>
        <sequence type="described" ref="VSP_044910"/>
    </isoform>
</comment>
<comment type="induction">
    <text evidence="8 11">Down-regulated in Alzheimer disease. No polymorphism or variant is however associated with Alzheimer disease for VPS26A.</text>
</comment>
<comment type="similarity">
    <text evidence="30">Belongs to the VPS26 family.</text>
</comment>
<feature type="chain" id="PRO_0000073007" description="Vacuolar protein sorting-associated protein 26A">
    <location>
        <begin position="1"/>
        <end position="327"/>
    </location>
</feature>
<feature type="region of interest" description="Disordered" evidence="2">
    <location>
        <begin position="306"/>
        <end position="327"/>
    </location>
</feature>
<feature type="compositionally biased region" description="Polar residues" evidence="2">
    <location>
        <begin position="316"/>
        <end position="327"/>
    </location>
</feature>
<feature type="modified residue" description="Phosphoserine" evidence="32">
    <location>
        <position position="315"/>
    </location>
</feature>
<feature type="splice variant" id="VSP_044910" description="In isoform 2." evidence="23">
    <original>GESIPIRLFLAGYDPTPTMRDVNKKFSVRYFLNLVLVDEEDRRYFKQQEIILWRKAPEKLRKQRTNFHQRFESPESQASAEQPEM</original>
    <variation>GDNFMEKSS</variation>
    <location>
        <begin position="243"/>
        <end position="327"/>
    </location>
</feature>
<feature type="mutagenesis site" description="Abolishes interaction with VPS35 and endosomal subcellular location.">
    <original>IM</original>
    <variation>DD</variation>
    <location>
        <begin position="235"/>
        <end position="236"/>
    </location>
</feature>
<feature type="sequence conflict" description="In Ref. 3; BAB14351." evidence="30" ref="3">
    <original>Q</original>
    <variation>R</variation>
    <location>
        <position position="75"/>
    </location>
</feature>
<feature type="sequence conflict" description="In Ref. 6; BQ048905." evidence="30" ref="6">
    <original>K</original>
    <variation>Q</variation>
    <location>
        <position position="242"/>
    </location>
</feature>
<feature type="sequence conflict" description="In Ref. 1; AAF89954 and 2; AAC39912." evidence="30" ref="1 2">
    <original>RY</original>
    <variation>SS</variation>
    <location>
        <begin position="285"/>
        <end position="286"/>
    </location>
</feature>
<feature type="turn" evidence="33">
    <location>
        <begin position="7"/>
        <end position="11"/>
    </location>
</feature>
<feature type="strand" evidence="33">
    <location>
        <begin position="12"/>
        <end position="18"/>
    </location>
</feature>
<feature type="helix" evidence="33">
    <location>
        <begin position="21"/>
        <end position="23"/>
    </location>
</feature>
<feature type="strand" evidence="33">
    <location>
        <begin position="26"/>
        <end position="30"/>
    </location>
</feature>
<feature type="helix" evidence="34">
    <location>
        <begin position="32"/>
        <end position="34"/>
    </location>
</feature>
<feature type="strand" evidence="33">
    <location>
        <begin position="36"/>
        <end position="42"/>
    </location>
</feature>
<feature type="strand" evidence="33">
    <location>
        <begin position="48"/>
        <end position="60"/>
    </location>
</feature>
<feature type="strand" evidence="33">
    <location>
        <begin position="63"/>
        <end position="66"/>
    </location>
</feature>
<feature type="strand" evidence="33">
    <location>
        <begin position="68"/>
        <end position="78"/>
    </location>
</feature>
<feature type="helix" evidence="34">
    <location>
        <begin position="82"/>
        <end position="84"/>
    </location>
</feature>
<feature type="strand" evidence="33">
    <location>
        <begin position="85"/>
        <end position="96"/>
    </location>
</feature>
<feature type="strand" evidence="33">
    <location>
        <begin position="98"/>
        <end position="101"/>
    </location>
</feature>
<feature type="strand" evidence="33">
    <location>
        <begin position="105"/>
        <end position="111"/>
    </location>
</feature>
<feature type="strand" evidence="33">
    <location>
        <begin position="124"/>
        <end position="136"/>
    </location>
</feature>
<feature type="strand" evidence="33">
    <location>
        <begin position="139"/>
        <end position="141"/>
    </location>
</feature>
<feature type="strand" evidence="33">
    <location>
        <begin position="143"/>
        <end position="151"/>
    </location>
</feature>
<feature type="strand" evidence="33">
    <location>
        <begin position="164"/>
        <end position="170"/>
    </location>
</feature>
<feature type="turn" evidence="33">
    <location>
        <begin position="171"/>
        <end position="173"/>
    </location>
</feature>
<feature type="strand" evidence="33">
    <location>
        <begin position="174"/>
        <end position="181"/>
    </location>
</feature>
<feature type="strand" evidence="33">
    <location>
        <begin position="183"/>
        <end position="186"/>
    </location>
</feature>
<feature type="strand" evidence="33">
    <location>
        <begin position="190"/>
        <end position="200"/>
    </location>
</feature>
<feature type="strand" evidence="33">
    <location>
        <begin position="204"/>
        <end position="218"/>
    </location>
</feature>
<feature type="helix" evidence="33">
    <location>
        <begin position="220"/>
        <end position="222"/>
    </location>
</feature>
<feature type="strand" evidence="33">
    <location>
        <begin position="224"/>
        <end position="234"/>
    </location>
</feature>
<feature type="strand" evidence="33">
    <location>
        <begin position="246"/>
        <end position="252"/>
    </location>
</feature>
<feature type="turn" evidence="33">
    <location>
        <begin position="253"/>
        <end position="255"/>
    </location>
</feature>
<feature type="strand" evidence="33">
    <location>
        <begin position="261"/>
        <end position="265"/>
    </location>
</feature>
<feature type="strand" evidence="33">
    <location>
        <begin position="268"/>
        <end position="280"/>
    </location>
</feature>
<feature type="strand" evidence="33">
    <location>
        <begin position="285"/>
        <end position="295"/>
    </location>
</feature>
<feature type="sequence conflict" description="In Ref. 6; BQ048905." evidence="30" ref="6">
    <original>G</original>
    <variation>R</variation>
    <location sequence="O75436-2">
        <position position="243"/>
    </location>
</feature>
<organism>
    <name type="scientific">Homo sapiens</name>
    <name type="common">Human</name>
    <dbReference type="NCBI Taxonomy" id="9606"/>
    <lineage>
        <taxon>Eukaryota</taxon>
        <taxon>Metazoa</taxon>
        <taxon>Chordata</taxon>
        <taxon>Craniata</taxon>
        <taxon>Vertebrata</taxon>
        <taxon>Euteleostomi</taxon>
        <taxon>Mammalia</taxon>
        <taxon>Eutheria</taxon>
        <taxon>Euarchontoglires</taxon>
        <taxon>Primates</taxon>
        <taxon>Haplorrhini</taxon>
        <taxon>Catarrhini</taxon>
        <taxon>Hominidae</taxon>
        <taxon>Homo</taxon>
    </lineage>
</organism>
<protein>
    <recommendedName>
        <fullName>Vacuolar protein sorting-associated protein 26A</fullName>
    </recommendedName>
    <alternativeName>
        <fullName>Vesicle protein sorting 26A</fullName>
        <shortName>hVPS26</shortName>
    </alternativeName>
</protein>
<dbReference type="EMBL" id="AF175266">
    <property type="protein sequence ID" value="AAF89954.1"/>
    <property type="molecule type" value="mRNA"/>
</dbReference>
<dbReference type="EMBL" id="AF054179">
    <property type="protein sequence ID" value="AAC39912.1"/>
    <property type="molecule type" value="mRNA"/>
</dbReference>
<dbReference type="EMBL" id="AK022992">
    <property type="protein sequence ID" value="BAB14351.1"/>
    <property type="molecule type" value="mRNA"/>
</dbReference>
<dbReference type="EMBL" id="AK315496">
    <property type="protein sequence ID" value="BAG37880.1"/>
    <property type="molecule type" value="mRNA"/>
</dbReference>
<dbReference type="EMBL" id="AL596223">
    <property type="status" value="NOT_ANNOTATED_CDS"/>
    <property type="molecule type" value="Genomic_DNA"/>
</dbReference>
<dbReference type="EMBL" id="AL442635">
    <property type="status" value="NOT_ANNOTATED_CDS"/>
    <property type="molecule type" value="Genomic_DNA"/>
</dbReference>
<dbReference type="EMBL" id="CH471083">
    <property type="protein sequence ID" value="EAW54313.1"/>
    <property type="molecule type" value="Genomic_DNA"/>
</dbReference>
<dbReference type="EMBL" id="BC022505">
    <property type="protein sequence ID" value="AAH22505.1"/>
    <property type="molecule type" value="mRNA"/>
</dbReference>
<dbReference type="EMBL" id="BQ048905">
    <property type="status" value="NOT_ANNOTATED_CDS"/>
    <property type="molecule type" value="mRNA"/>
</dbReference>
<dbReference type="CCDS" id="CCDS41536.1">
    <molecule id="O75436-2"/>
</dbReference>
<dbReference type="CCDS" id="CCDS7286.1">
    <molecule id="O75436-1"/>
</dbReference>
<dbReference type="RefSeq" id="NP_001030337.1">
    <molecule id="O75436-2"/>
    <property type="nucleotide sequence ID" value="NM_001035260.3"/>
</dbReference>
<dbReference type="RefSeq" id="NP_001305875.1">
    <property type="nucleotide sequence ID" value="NM_001318946.1"/>
</dbReference>
<dbReference type="RefSeq" id="NP_004887.2">
    <molecule id="O75436-1"/>
    <property type="nucleotide sequence ID" value="NM_004896.4"/>
</dbReference>
<dbReference type="RefSeq" id="XP_054223195.1">
    <molecule id="O75436-1"/>
    <property type="nucleotide sequence ID" value="XM_054367220.1"/>
</dbReference>
<dbReference type="PDB" id="2FAU">
    <property type="method" value="X-ray"/>
    <property type="resolution" value="2.10 A"/>
    <property type="chains" value="A=1-327"/>
</dbReference>
<dbReference type="PDB" id="5F0J">
    <property type="method" value="X-ray"/>
    <property type="resolution" value="2.70 A"/>
    <property type="chains" value="B=2-326"/>
</dbReference>
<dbReference type="PDB" id="5F0L">
    <property type="method" value="X-ray"/>
    <property type="resolution" value="3.20 A"/>
    <property type="chains" value="B=1-317"/>
</dbReference>
<dbReference type="PDB" id="5F0M">
    <property type="method" value="X-ray"/>
    <property type="resolution" value="3.10 A"/>
    <property type="chains" value="B=1-321"/>
</dbReference>
<dbReference type="PDB" id="5F0P">
    <property type="method" value="X-ray"/>
    <property type="resolution" value="2.78 A"/>
    <property type="chains" value="B=1-321"/>
</dbReference>
<dbReference type="PDB" id="7BLO">
    <property type="method" value="EM"/>
    <property type="resolution" value="9.50 A"/>
    <property type="chains" value="F/J=8-301"/>
</dbReference>
<dbReference type="PDBsum" id="2FAU"/>
<dbReference type="PDBsum" id="5F0J"/>
<dbReference type="PDBsum" id="5F0L"/>
<dbReference type="PDBsum" id="5F0M"/>
<dbReference type="PDBsum" id="5F0P"/>
<dbReference type="PDBsum" id="7BLO"/>
<dbReference type="EMDB" id="EMD-12221"/>
<dbReference type="SMR" id="O75436"/>
<dbReference type="BioGRID" id="114930">
    <property type="interactions" value="209"/>
</dbReference>
<dbReference type="ComplexPortal" id="CPX-7842">
    <property type="entry name" value="Retromer complex, VPS26A variant"/>
</dbReference>
<dbReference type="CORUM" id="O75436"/>
<dbReference type="DIP" id="DIP-29075N"/>
<dbReference type="FunCoup" id="O75436">
    <property type="interactions" value="3490"/>
</dbReference>
<dbReference type="IntAct" id="O75436">
    <property type="interactions" value="88"/>
</dbReference>
<dbReference type="MINT" id="O75436"/>
<dbReference type="STRING" id="9606.ENSP00000263559"/>
<dbReference type="TCDB" id="9.A.3.1.1">
    <property type="family name" value="the sorting nexin27 (snx27)-retromer assembly apparatus (retromeraa) family"/>
</dbReference>
<dbReference type="GlyGen" id="O75436">
    <property type="glycosylation" value="2 sites, 1 O-linked glycan (1 site)"/>
</dbReference>
<dbReference type="iPTMnet" id="O75436"/>
<dbReference type="MetOSite" id="O75436"/>
<dbReference type="PhosphoSitePlus" id="O75436"/>
<dbReference type="SwissPalm" id="O75436"/>
<dbReference type="BioMuta" id="VPS26A"/>
<dbReference type="jPOST" id="O75436"/>
<dbReference type="MassIVE" id="O75436"/>
<dbReference type="PaxDb" id="9606-ENSP00000362480"/>
<dbReference type="PeptideAtlas" id="O75436"/>
<dbReference type="ProteomicsDB" id="2454"/>
<dbReference type="ProteomicsDB" id="50002">
    <molecule id="O75436-1"/>
</dbReference>
<dbReference type="Pumba" id="O75436"/>
<dbReference type="Antibodypedia" id="28695">
    <property type="antibodies" value="231 antibodies from 35 providers"/>
</dbReference>
<dbReference type="DNASU" id="9559"/>
<dbReference type="Ensembl" id="ENST00000263559.11">
    <molecule id="O75436-1"/>
    <property type="protein sequence ID" value="ENSP00000263559.6"/>
    <property type="gene ID" value="ENSG00000122958.15"/>
</dbReference>
<dbReference type="Ensembl" id="ENST00000373382.5">
    <molecule id="O75436-1"/>
    <property type="protein sequence ID" value="ENSP00000362480.1"/>
    <property type="gene ID" value="ENSG00000122958.15"/>
</dbReference>
<dbReference type="Ensembl" id="ENST00000395098.5">
    <molecule id="O75436-2"/>
    <property type="protein sequence ID" value="ENSP00000378532.1"/>
    <property type="gene ID" value="ENSG00000122958.15"/>
</dbReference>
<dbReference type="GeneID" id="9559"/>
<dbReference type="KEGG" id="hsa:9559"/>
<dbReference type="MANE-Select" id="ENST00000263559.11">
    <property type="protein sequence ID" value="ENSP00000263559.6"/>
    <property type="RefSeq nucleotide sequence ID" value="NM_004896.5"/>
    <property type="RefSeq protein sequence ID" value="NP_004887.2"/>
</dbReference>
<dbReference type="UCSC" id="uc001jpb.4">
    <molecule id="O75436-1"/>
    <property type="organism name" value="human"/>
</dbReference>
<dbReference type="AGR" id="HGNC:12711"/>
<dbReference type="CTD" id="9559"/>
<dbReference type="DisGeNET" id="9559"/>
<dbReference type="GeneCards" id="VPS26A"/>
<dbReference type="HGNC" id="HGNC:12711">
    <property type="gene designation" value="VPS26A"/>
</dbReference>
<dbReference type="HPA" id="ENSG00000122958">
    <property type="expression patterns" value="Low tissue specificity"/>
</dbReference>
<dbReference type="MIM" id="605506">
    <property type="type" value="gene"/>
</dbReference>
<dbReference type="neXtProt" id="NX_O75436"/>
<dbReference type="OpenTargets" id="ENSG00000122958"/>
<dbReference type="PharmGKB" id="PA37326"/>
<dbReference type="VEuPathDB" id="HostDB:ENSG00000122958"/>
<dbReference type="eggNOG" id="KOG3063">
    <property type="taxonomic scope" value="Eukaryota"/>
</dbReference>
<dbReference type="GeneTree" id="ENSGT00950000183064"/>
<dbReference type="HOGENOM" id="CLU_031077_0_0_1"/>
<dbReference type="InParanoid" id="O75436"/>
<dbReference type="OMA" id="AGKVCIE"/>
<dbReference type="OrthoDB" id="3821113at2759"/>
<dbReference type="PAN-GO" id="O75436">
    <property type="GO annotations" value="4 GO annotations based on evolutionary models"/>
</dbReference>
<dbReference type="PhylomeDB" id="O75436"/>
<dbReference type="TreeFam" id="TF300907"/>
<dbReference type="PathwayCommons" id="O75436"/>
<dbReference type="Reactome" id="R-HSA-3238698">
    <property type="pathway name" value="WNT ligand biogenesis and trafficking"/>
</dbReference>
<dbReference type="SignaLink" id="O75436"/>
<dbReference type="BioGRID-ORCS" id="9559">
    <property type="hits" value="83 hits in 1133 CRISPR screens"/>
</dbReference>
<dbReference type="ChiTaRS" id="VPS26A">
    <property type="organism name" value="human"/>
</dbReference>
<dbReference type="EvolutionaryTrace" id="O75436"/>
<dbReference type="GeneWiki" id="VPS26A"/>
<dbReference type="GenomeRNAi" id="9559"/>
<dbReference type="Pharos" id="O75436">
    <property type="development level" value="Tbio"/>
</dbReference>
<dbReference type="PRO" id="PR:O75436"/>
<dbReference type="Proteomes" id="UP000005640">
    <property type="component" value="Chromosome 10"/>
</dbReference>
<dbReference type="RNAct" id="O75436">
    <property type="molecule type" value="protein"/>
</dbReference>
<dbReference type="Bgee" id="ENSG00000122958">
    <property type="expression patterns" value="Expressed in parietal pleura and 211 other cell types or tissues"/>
</dbReference>
<dbReference type="ExpressionAtlas" id="O75436">
    <property type="expression patterns" value="baseline and differential"/>
</dbReference>
<dbReference type="GO" id="GO:0005829">
    <property type="term" value="C:cytosol"/>
    <property type="evidence" value="ECO:0000304"/>
    <property type="project" value="Reactome"/>
</dbReference>
<dbReference type="GO" id="GO:0005769">
    <property type="term" value="C:early endosome"/>
    <property type="evidence" value="ECO:0000314"/>
    <property type="project" value="UniProtKB"/>
</dbReference>
<dbReference type="GO" id="GO:0005768">
    <property type="term" value="C:endosome"/>
    <property type="evidence" value="ECO:0000314"/>
    <property type="project" value="HPA"/>
</dbReference>
<dbReference type="GO" id="GO:0010008">
    <property type="term" value="C:endosome membrane"/>
    <property type="evidence" value="ECO:0000314"/>
    <property type="project" value="UniProtKB"/>
</dbReference>
<dbReference type="GO" id="GO:0005764">
    <property type="term" value="C:lysosome"/>
    <property type="evidence" value="ECO:0000314"/>
    <property type="project" value="HPA"/>
</dbReference>
<dbReference type="GO" id="GO:0030904">
    <property type="term" value="C:retromer complex"/>
    <property type="evidence" value="ECO:0000314"/>
    <property type="project" value="UniProtKB"/>
</dbReference>
<dbReference type="GO" id="GO:0030906">
    <property type="term" value="C:retromer, cargo-selective complex"/>
    <property type="evidence" value="ECO:0000314"/>
    <property type="project" value="ParkinsonsUK-UCL"/>
</dbReference>
<dbReference type="GO" id="GO:0097422">
    <property type="term" value="C:tubular endosome"/>
    <property type="evidence" value="ECO:0000314"/>
    <property type="project" value="UniProtKB"/>
</dbReference>
<dbReference type="GO" id="GO:0031982">
    <property type="term" value="C:vesicle"/>
    <property type="evidence" value="ECO:0000314"/>
    <property type="project" value="UniProtKB"/>
</dbReference>
<dbReference type="GO" id="GO:0032456">
    <property type="term" value="P:endocytic recycling"/>
    <property type="evidence" value="ECO:0000315"/>
    <property type="project" value="UniProtKB"/>
</dbReference>
<dbReference type="GO" id="GO:0006886">
    <property type="term" value="P:intracellular protein transport"/>
    <property type="evidence" value="ECO:0000318"/>
    <property type="project" value="GO_Central"/>
</dbReference>
<dbReference type="GO" id="GO:0016241">
    <property type="term" value="P:regulation of macroautophagy"/>
    <property type="evidence" value="ECO:0000304"/>
    <property type="project" value="ParkinsonsUK-UCL"/>
</dbReference>
<dbReference type="GO" id="GO:0042147">
    <property type="term" value="P:retrograde transport, endosome to Golgi"/>
    <property type="evidence" value="ECO:0000315"/>
    <property type="project" value="UniProtKB"/>
</dbReference>
<dbReference type="FunFam" id="2.60.40.640:FF:000001">
    <property type="entry name" value="Vacuolar protein sorting-associated protein 26A"/>
    <property type="match status" value="1"/>
</dbReference>
<dbReference type="FunFam" id="2.60.40.640:FF:000002">
    <property type="entry name" value="Vacuolar protein sorting-associated protein 26A"/>
    <property type="match status" value="1"/>
</dbReference>
<dbReference type="Gene3D" id="2.60.40.640">
    <property type="match status" value="2"/>
</dbReference>
<dbReference type="InterPro" id="IPR014752">
    <property type="entry name" value="Arrestin-like_C"/>
</dbReference>
<dbReference type="InterPro" id="IPR028934">
    <property type="entry name" value="Vps26-related"/>
</dbReference>
<dbReference type="PANTHER" id="PTHR12233">
    <property type="entry name" value="VACUOLAR PROTEIN SORTING 26 RELATED"/>
    <property type="match status" value="1"/>
</dbReference>
<dbReference type="Pfam" id="PF03643">
    <property type="entry name" value="Vps26"/>
    <property type="match status" value="1"/>
</dbReference>
<proteinExistence type="evidence at protein level"/>